<geneLocation type="mitochondrion"/>
<protein>
    <recommendedName>
        <fullName>ATP synthase subunit a</fullName>
    </recommendedName>
    <alternativeName>
        <fullName>F-ATPase protein 6</fullName>
    </alternativeName>
</protein>
<reference key="1">
    <citation type="submission" date="1997-04" db="EMBL/GenBank/DDBJ databases">
        <authorList>
            <person name="Beagley C.T."/>
            <person name="Okimoto R."/>
            <person name="Wolstenholme D.R."/>
        </authorList>
    </citation>
    <scope>NUCLEOTIDE SEQUENCE [GENOMIC DNA]</scope>
    <source>
        <strain>White morph</strain>
    </source>
</reference>
<feature type="chain" id="PRO_0000082138" description="ATP synthase subunit a">
    <location>
        <begin position="1"/>
        <end position="229"/>
    </location>
</feature>
<feature type="transmembrane region" description="Helical" evidence="1">
    <location>
        <begin position="14"/>
        <end position="34"/>
    </location>
</feature>
<feature type="transmembrane region" description="Helical" evidence="1">
    <location>
        <begin position="68"/>
        <end position="88"/>
    </location>
</feature>
<feature type="transmembrane region" description="Helical" evidence="1">
    <location>
        <begin position="98"/>
        <end position="118"/>
    </location>
</feature>
<feature type="transmembrane region" description="Helical" evidence="1">
    <location>
        <begin position="124"/>
        <end position="144"/>
    </location>
</feature>
<feature type="transmembrane region" description="Helical" evidence="1">
    <location>
        <begin position="157"/>
        <end position="179"/>
    </location>
</feature>
<feature type="transmembrane region" description="Helical" evidence="1">
    <location>
        <begin position="189"/>
        <end position="209"/>
    </location>
</feature>
<sequence>MGAAYFDQFKVVDLIAITNSSMMMMLAVAVALILLKGNRLIPNRWQAVMESIYDHFHGLVKDNSGPQYFPFVFTLFIFIVFLNILGLFPYVFTVTVHIVVTLGLSFSIVIGVTLGGLWKFKWNFLSILMPAGAPLALAPLLVLIETVSYISRAISLGVRLAANLSAGHLLFAILAGFGFNMLTTAGVFNIFPVLIMVFISLLEAAVAVIQAYVFSLLTTIYLADTIVLH</sequence>
<evidence type="ECO:0000255" key="1"/>
<evidence type="ECO:0000305" key="2"/>
<dbReference type="EMBL" id="AF000023">
    <property type="protein sequence ID" value="AAC04634.1"/>
    <property type="molecule type" value="Genomic_DNA"/>
</dbReference>
<dbReference type="PIR" id="T11888">
    <property type="entry name" value="T11888"/>
</dbReference>
<dbReference type="SMR" id="O47494"/>
<dbReference type="CTD" id="4508"/>
<dbReference type="GO" id="GO:0005743">
    <property type="term" value="C:mitochondrial inner membrane"/>
    <property type="evidence" value="ECO:0007669"/>
    <property type="project" value="UniProtKB-SubCell"/>
</dbReference>
<dbReference type="GO" id="GO:0045259">
    <property type="term" value="C:proton-transporting ATP synthase complex"/>
    <property type="evidence" value="ECO:0007669"/>
    <property type="project" value="UniProtKB-KW"/>
</dbReference>
<dbReference type="GO" id="GO:0046933">
    <property type="term" value="F:proton-transporting ATP synthase activity, rotational mechanism"/>
    <property type="evidence" value="ECO:0007669"/>
    <property type="project" value="TreeGrafter"/>
</dbReference>
<dbReference type="CDD" id="cd00310">
    <property type="entry name" value="ATP-synt_Fo_a_6"/>
    <property type="match status" value="1"/>
</dbReference>
<dbReference type="FunFam" id="1.20.120.220:FF:000003">
    <property type="entry name" value="ATP synthase subunit a"/>
    <property type="match status" value="1"/>
</dbReference>
<dbReference type="Gene3D" id="1.20.120.220">
    <property type="entry name" value="ATP synthase, F0 complex, subunit A"/>
    <property type="match status" value="1"/>
</dbReference>
<dbReference type="HAMAP" id="MF_01393">
    <property type="entry name" value="ATP_synth_a_bact"/>
    <property type="match status" value="1"/>
</dbReference>
<dbReference type="InterPro" id="IPR000568">
    <property type="entry name" value="ATP_synth_F0_asu"/>
</dbReference>
<dbReference type="InterPro" id="IPR023011">
    <property type="entry name" value="ATP_synth_F0_asu_AS"/>
</dbReference>
<dbReference type="InterPro" id="IPR045083">
    <property type="entry name" value="ATP_synth_F0_asu_bact/mt"/>
</dbReference>
<dbReference type="InterPro" id="IPR035908">
    <property type="entry name" value="F0_ATP_A_sf"/>
</dbReference>
<dbReference type="NCBIfam" id="TIGR01131">
    <property type="entry name" value="ATP_synt_6_or_A"/>
    <property type="match status" value="1"/>
</dbReference>
<dbReference type="PANTHER" id="PTHR11410">
    <property type="entry name" value="ATP SYNTHASE SUBUNIT A"/>
    <property type="match status" value="1"/>
</dbReference>
<dbReference type="PANTHER" id="PTHR11410:SF0">
    <property type="entry name" value="ATP SYNTHASE SUBUNIT A"/>
    <property type="match status" value="1"/>
</dbReference>
<dbReference type="Pfam" id="PF00119">
    <property type="entry name" value="ATP-synt_A"/>
    <property type="match status" value="1"/>
</dbReference>
<dbReference type="PRINTS" id="PR00123">
    <property type="entry name" value="ATPASEA"/>
</dbReference>
<dbReference type="SUPFAM" id="SSF81336">
    <property type="entry name" value="F1F0 ATP synthase subunit A"/>
    <property type="match status" value="1"/>
</dbReference>
<dbReference type="PROSITE" id="PS00449">
    <property type="entry name" value="ATPASE_A"/>
    <property type="match status" value="1"/>
</dbReference>
<accession>O47494</accession>
<gene>
    <name type="primary">ATPASE6</name>
</gene>
<comment type="function">
    <text>Mitochondrial membrane ATP synthase (F(1)F(0) ATP synthase or Complex V) produces ATP from ADP in the presence of a proton gradient across the membrane which is generated by electron transport complexes of the respiratory chain. F-type ATPases consist of two structural domains, F(1) - containing the extramembraneous catalytic core and F(0) - containing the membrane proton channel, linked together by a central stalk and a peripheral stalk. During catalysis, ATP synthesis in the catalytic domain of F(1) is coupled via a rotary mechanism of the central stalk subunits to proton translocation. Key component of the proton channel; it may play a direct role in the translocation of protons across the membrane.</text>
</comment>
<comment type="subunit">
    <text>F-type ATPases have 2 components, CF(1) - the catalytic core - and CF(0) - the membrane proton channel. CF(1) has five subunits: alpha(3), beta(3), gamma(1), delta(1), epsilon(1). CF(0) has three main subunits: a, b and c.</text>
</comment>
<comment type="subcellular location">
    <subcellularLocation>
        <location>Mitochondrion inner membrane</location>
        <topology>Multi-pass membrane protein</topology>
    </subcellularLocation>
</comment>
<comment type="similarity">
    <text evidence="2">Belongs to the ATPase A chain family.</text>
</comment>
<organism>
    <name type="scientific">Metridium senile</name>
    <name type="common">Brown sea anemone</name>
    <name type="synonym">Frilled sea anemone</name>
    <dbReference type="NCBI Taxonomy" id="6116"/>
    <lineage>
        <taxon>Eukaryota</taxon>
        <taxon>Metazoa</taxon>
        <taxon>Cnidaria</taxon>
        <taxon>Anthozoa</taxon>
        <taxon>Hexacorallia</taxon>
        <taxon>Actiniaria</taxon>
        <taxon>Nynantheae</taxon>
        <taxon>Metridiidae</taxon>
        <taxon>Metridium</taxon>
    </lineage>
</organism>
<proteinExistence type="inferred from homology"/>
<keyword id="KW-0066">ATP synthesis</keyword>
<keyword id="KW-0138">CF(0)</keyword>
<keyword id="KW-0375">Hydrogen ion transport</keyword>
<keyword id="KW-0406">Ion transport</keyword>
<keyword id="KW-0472">Membrane</keyword>
<keyword id="KW-0496">Mitochondrion</keyword>
<keyword id="KW-0999">Mitochondrion inner membrane</keyword>
<keyword id="KW-0812">Transmembrane</keyword>
<keyword id="KW-1133">Transmembrane helix</keyword>
<keyword id="KW-0813">Transport</keyword>
<name>ATP6_METSE</name>